<feature type="chain" id="PRO_0000068364" description="Protein KlaC">
    <location>
        <begin position="1"/>
        <end position="317"/>
    </location>
</feature>
<accession>Q52329</accession>
<reference key="1">
    <citation type="journal article" date="1991" name="J. Bacteriol.">
        <title>Structural, molecular, and genetic analysis of the kilA operon of broad-host-range plasmid RK2.</title>
        <authorList>
            <person name="Goncharoff P."/>
            <person name="Saadi S."/>
            <person name="Chang C.H."/>
            <person name="Saltman L.H."/>
            <person name="Figurski D.H."/>
        </authorList>
    </citation>
    <scope>NUCLEOTIDE SEQUENCE [GENOMIC DNA]</scope>
</reference>
<dbReference type="EMBL" id="M62426">
    <property type="protein sequence ID" value="AAA26403.1"/>
    <property type="molecule type" value="Genomic_DNA"/>
</dbReference>
<dbReference type="RefSeq" id="WP_011205831.1">
    <property type="nucleotide sequence ID" value="NZ_VMTS01000048.1"/>
</dbReference>
<dbReference type="GO" id="GO:0046690">
    <property type="term" value="P:response to tellurium ion"/>
    <property type="evidence" value="ECO:0007669"/>
    <property type="project" value="UniProtKB-KW"/>
</dbReference>
<dbReference type="InterPro" id="IPR007039">
    <property type="entry name" value="TrbC/VirB2"/>
</dbReference>
<dbReference type="Pfam" id="PF04956">
    <property type="entry name" value="TrbC"/>
    <property type="match status" value="1"/>
</dbReference>
<sequence length="317" mass="32381">MNATNTDVFAQVGGLEARGAKMKKRGTRFLIAALAVLAIAGIGAVTGWAISPSATPGSIDVPQVLASTFSDQVPGSEGGGLGGGLPFTSAVGAFTDFMAGPAIFTLGILGIVVAGAVLVFGGEFSGFVRSVCMMVIAVSMIFVSSNLVKGILGGDHDAGPAEPSPRARFMAAVEAKDFARVQELIEARGAKSAADYVLAQLAVAEGLDRKPGARVVVGKAAGSMAMPPAALGFTPRGEAAYAIERSAYGEPRSSIAKQYQQEWNRKAATWWAMAGVAGIIGAILAAAATGFVGLAVSIRNRVKRVRDLLVMEPGAEP</sequence>
<comment type="function">
    <text>Belongs to the kla operon, which is associated with cryptic tellurite resistance, and IncW plasmid fertility inhibition.</text>
</comment>
<gene>
    <name type="primary">klaC</name>
    <name type="synonym">telB</name>
</gene>
<geneLocation type="plasmid">
    <name>IncP-alpha RK2</name>
</geneLocation>
<proteinExistence type="predicted"/>
<keyword id="KW-0614">Plasmid</keyword>
<keyword id="KW-0778">Tellurium resistance</keyword>
<organism>
    <name type="scientific">Escherichia coli</name>
    <dbReference type="NCBI Taxonomy" id="562"/>
    <lineage>
        <taxon>Bacteria</taxon>
        <taxon>Pseudomonadati</taxon>
        <taxon>Pseudomonadota</taxon>
        <taxon>Gammaproteobacteria</taxon>
        <taxon>Enterobacterales</taxon>
        <taxon>Enterobacteriaceae</taxon>
        <taxon>Escherichia</taxon>
    </lineage>
</organism>
<name>KLAC_ECOLX</name>
<protein>
    <recommendedName>
        <fullName>Protein KlaC</fullName>
    </recommendedName>
    <alternativeName>
        <fullName>Protein TelB</fullName>
    </alternativeName>
</protein>